<sequence length="340" mass="37989">MQLVGMVALMVGVLVSVAYLVYMERKVMAFMQLRHGPSVVGPWGLLQPFSDALKLLAKECIIPFKSRGWAFFAAPVITFALALAGWAVIPLGATEVIRDGVVVVMPYVVADLNLGVLYVLAISSLEVYGIIMAGWASGSNYAFLGAIRSVSQMISYEMSMGLVMLSVSLCAGSLRLTDIVVARHAMPYWMDLLLLPMAGVFFVSMLAETNRHPFDLPEAESELVSGYNVEYSSMSFAMFFLGEYANMILVSAMMVVLFLGGWYPPLNIHILYYIPGFVWFCSKVFLLLFCFIWVRSTVPRYRYDQLMRLGWKVFLPFSFVWVMVISGVLLWVKALPGMQN</sequence>
<name>NUOH_ANAPZ</name>
<feature type="chain" id="PRO_0000244888" description="NADH-quinone oxidoreductase subunit H">
    <location>
        <begin position="1"/>
        <end position="340"/>
    </location>
</feature>
<feature type="transmembrane region" description="Helical" evidence="1">
    <location>
        <begin position="3"/>
        <end position="23"/>
    </location>
</feature>
<feature type="transmembrane region" description="Helical" evidence="1">
    <location>
        <begin position="69"/>
        <end position="89"/>
    </location>
</feature>
<feature type="transmembrane region" description="Helical" evidence="1">
    <location>
        <begin position="102"/>
        <end position="122"/>
    </location>
</feature>
<feature type="transmembrane region" description="Helical" evidence="1">
    <location>
        <begin position="127"/>
        <end position="147"/>
    </location>
</feature>
<feature type="transmembrane region" description="Helical" evidence="1">
    <location>
        <begin position="154"/>
        <end position="174"/>
    </location>
</feature>
<feature type="transmembrane region" description="Helical" evidence="1">
    <location>
        <begin position="186"/>
        <end position="206"/>
    </location>
</feature>
<feature type="transmembrane region" description="Helical" evidence="1">
    <location>
        <begin position="248"/>
        <end position="268"/>
    </location>
</feature>
<feature type="transmembrane region" description="Helical" evidence="1">
    <location>
        <begin position="274"/>
        <end position="294"/>
    </location>
</feature>
<feature type="transmembrane region" description="Helical" evidence="1">
    <location>
        <begin position="312"/>
        <end position="332"/>
    </location>
</feature>
<organism>
    <name type="scientific">Anaplasma phagocytophilum (strain HZ)</name>
    <dbReference type="NCBI Taxonomy" id="212042"/>
    <lineage>
        <taxon>Bacteria</taxon>
        <taxon>Pseudomonadati</taxon>
        <taxon>Pseudomonadota</taxon>
        <taxon>Alphaproteobacteria</taxon>
        <taxon>Rickettsiales</taxon>
        <taxon>Anaplasmataceae</taxon>
        <taxon>Anaplasma</taxon>
        <taxon>phagocytophilum group</taxon>
    </lineage>
</organism>
<protein>
    <recommendedName>
        <fullName evidence="1">NADH-quinone oxidoreductase subunit H</fullName>
        <ecNumber evidence="1">7.1.1.-</ecNumber>
    </recommendedName>
    <alternativeName>
        <fullName evidence="1">NADH dehydrogenase I subunit H</fullName>
    </alternativeName>
    <alternativeName>
        <fullName evidence="1">NDH-1 subunit H</fullName>
    </alternativeName>
</protein>
<keyword id="KW-0997">Cell inner membrane</keyword>
<keyword id="KW-1003">Cell membrane</keyword>
<keyword id="KW-0472">Membrane</keyword>
<keyword id="KW-0520">NAD</keyword>
<keyword id="KW-0874">Quinone</keyword>
<keyword id="KW-1278">Translocase</keyword>
<keyword id="KW-0812">Transmembrane</keyword>
<keyword id="KW-1133">Transmembrane helix</keyword>
<keyword id="KW-0830">Ubiquinone</keyword>
<evidence type="ECO:0000255" key="1">
    <source>
        <dbReference type="HAMAP-Rule" id="MF_01350"/>
    </source>
</evidence>
<reference key="1">
    <citation type="journal article" date="2006" name="PLoS Genet.">
        <title>Comparative genomics of emerging human ehrlichiosis agents.</title>
        <authorList>
            <person name="Dunning Hotopp J.C."/>
            <person name="Lin M."/>
            <person name="Madupu R."/>
            <person name="Crabtree J."/>
            <person name="Angiuoli S.V."/>
            <person name="Eisen J.A."/>
            <person name="Seshadri R."/>
            <person name="Ren Q."/>
            <person name="Wu M."/>
            <person name="Utterback T.R."/>
            <person name="Smith S."/>
            <person name="Lewis M."/>
            <person name="Khouri H."/>
            <person name="Zhang C."/>
            <person name="Niu H."/>
            <person name="Lin Q."/>
            <person name="Ohashi N."/>
            <person name="Zhi N."/>
            <person name="Nelson W.C."/>
            <person name="Brinkac L.M."/>
            <person name="Dodson R.J."/>
            <person name="Rosovitz M.J."/>
            <person name="Sundaram J.P."/>
            <person name="Daugherty S.C."/>
            <person name="Davidsen T."/>
            <person name="Durkin A.S."/>
            <person name="Gwinn M.L."/>
            <person name="Haft D.H."/>
            <person name="Selengut J.D."/>
            <person name="Sullivan S.A."/>
            <person name="Zafar N."/>
            <person name="Zhou L."/>
            <person name="Benahmed F."/>
            <person name="Forberger H."/>
            <person name="Halpin R."/>
            <person name="Mulligan S."/>
            <person name="Robinson J."/>
            <person name="White O."/>
            <person name="Rikihisa Y."/>
            <person name="Tettelin H."/>
        </authorList>
    </citation>
    <scope>NUCLEOTIDE SEQUENCE [LARGE SCALE GENOMIC DNA]</scope>
    <source>
        <strain>HZ</strain>
    </source>
</reference>
<comment type="function">
    <text evidence="1">NDH-1 shuttles electrons from NADH, via FMN and iron-sulfur (Fe-S) centers, to quinones in the respiratory chain. The immediate electron acceptor for the enzyme in this species is believed to be ubiquinone. Couples the redox reaction to proton translocation (for every two electrons transferred, four hydrogen ions are translocated across the cytoplasmic membrane), and thus conserves the redox energy in a proton gradient. This subunit may bind ubiquinone.</text>
</comment>
<comment type="catalytic activity">
    <reaction evidence="1">
        <text>a quinone + NADH + 5 H(+)(in) = a quinol + NAD(+) + 4 H(+)(out)</text>
        <dbReference type="Rhea" id="RHEA:57888"/>
        <dbReference type="ChEBI" id="CHEBI:15378"/>
        <dbReference type="ChEBI" id="CHEBI:24646"/>
        <dbReference type="ChEBI" id="CHEBI:57540"/>
        <dbReference type="ChEBI" id="CHEBI:57945"/>
        <dbReference type="ChEBI" id="CHEBI:132124"/>
    </reaction>
</comment>
<comment type="subunit">
    <text evidence="1">NDH-1 is composed of 14 different subunits. Subunits NuoA, H, J, K, L, M, N constitute the membrane sector of the complex.</text>
</comment>
<comment type="subcellular location">
    <subcellularLocation>
        <location evidence="1">Cell inner membrane</location>
        <topology evidence="1">Multi-pass membrane protein</topology>
    </subcellularLocation>
</comment>
<comment type="similarity">
    <text evidence="1">Belongs to the complex I subunit 1 family.</text>
</comment>
<dbReference type="EC" id="7.1.1.-" evidence="1"/>
<dbReference type="EMBL" id="CP000235">
    <property type="protein sequence ID" value="ABD43986.1"/>
    <property type="molecule type" value="Genomic_DNA"/>
</dbReference>
<dbReference type="SMR" id="Q2GK09"/>
<dbReference type="STRING" id="212042.APH_0711"/>
<dbReference type="PaxDb" id="212042-APH_0711"/>
<dbReference type="EnsemblBacteria" id="ABD43986">
    <property type="protein sequence ID" value="ABD43986"/>
    <property type="gene ID" value="APH_0711"/>
</dbReference>
<dbReference type="KEGG" id="aph:APH_0711"/>
<dbReference type="eggNOG" id="COG1005">
    <property type="taxonomic scope" value="Bacteria"/>
</dbReference>
<dbReference type="HOGENOM" id="CLU_015134_0_1_5"/>
<dbReference type="Proteomes" id="UP000001943">
    <property type="component" value="Chromosome"/>
</dbReference>
<dbReference type="GO" id="GO:0005886">
    <property type="term" value="C:plasma membrane"/>
    <property type="evidence" value="ECO:0007669"/>
    <property type="project" value="UniProtKB-SubCell"/>
</dbReference>
<dbReference type="GO" id="GO:0003954">
    <property type="term" value="F:NADH dehydrogenase activity"/>
    <property type="evidence" value="ECO:0007669"/>
    <property type="project" value="TreeGrafter"/>
</dbReference>
<dbReference type="GO" id="GO:0016655">
    <property type="term" value="F:oxidoreductase activity, acting on NAD(P)H, quinone or similar compound as acceptor"/>
    <property type="evidence" value="ECO:0007669"/>
    <property type="project" value="UniProtKB-UniRule"/>
</dbReference>
<dbReference type="GO" id="GO:0048038">
    <property type="term" value="F:quinone binding"/>
    <property type="evidence" value="ECO:0007669"/>
    <property type="project" value="UniProtKB-KW"/>
</dbReference>
<dbReference type="GO" id="GO:0009060">
    <property type="term" value="P:aerobic respiration"/>
    <property type="evidence" value="ECO:0007669"/>
    <property type="project" value="TreeGrafter"/>
</dbReference>
<dbReference type="HAMAP" id="MF_01350">
    <property type="entry name" value="NDH1_NuoH"/>
    <property type="match status" value="1"/>
</dbReference>
<dbReference type="InterPro" id="IPR001694">
    <property type="entry name" value="NADH_UbQ_OxRdtase_su1/FPO"/>
</dbReference>
<dbReference type="InterPro" id="IPR018086">
    <property type="entry name" value="NADH_UbQ_OxRdtase_su1_CS"/>
</dbReference>
<dbReference type="NCBIfam" id="NF004741">
    <property type="entry name" value="PRK06076.1-2"/>
    <property type="match status" value="1"/>
</dbReference>
<dbReference type="NCBIfam" id="NF004745">
    <property type="entry name" value="PRK06076.1-6"/>
    <property type="match status" value="1"/>
</dbReference>
<dbReference type="PANTHER" id="PTHR11432">
    <property type="entry name" value="NADH DEHYDROGENASE SUBUNIT 1"/>
    <property type="match status" value="1"/>
</dbReference>
<dbReference type="PANTHER" id="PTHR11432:SF3">
    <property type="entry name" value="NADH-UBIQUINONE OXIDOREDUCTASE CHAIN 1"/>
    <property type="match status" value="1"/>
</dbReference>
<dbReference type="Pfam" id="PF00146">
    <property type="entry name" value="NADHdh"/>
    <property type="match status" value="1"/>
</dbReference>
<dbReference type="PROSITE" id="PS00667">
    <property type="entry name" value="COMPLEX1_ND1_1"/>
    <property type="match status" value="1"/>
</dbReference>
<dbReference type="PROSITE" id="PS00668">
    <property type="entry name" value="COMPLEX1_ND1_2"/>
    <property type="match status" value="1"/>
</dbReference>
<accession>Q2GK09</accession>
<gene>
    <name evidence="1" type="primary">nuoH</name>
    <name type="ordered locus">APH_0711</name>
</gene>
<proteinExistence type="inferred from homology"/>